<dbReference type="EMBL" id="AE000520">
    <property type="protein sequence ID" value="AAC65815.1"/>
    <property type="molecule type" value="Genomic_DNA"/>
</dbReference>
<dbReference type="PIR" id="A71274">
    <property type="entry name" value="A71274"/>
</dbReference>
<dbReference type="RefSeq" id="WP_010882293.1">
    <property type="nucleotide sequence ID" value="NC_021490.2"/>
</dbReference>
<dbReference type="SMR" id="O83821"/>
<dbReference type="IntAct" id="O83821">
    <property type="interactions" value="2"/>
</dbReference>
<dbReference type="STRING" id="243276.TP_0849"/>
<dbReference type="EnsemblBacteria" id="AAC65815">
    <property type="protein sequence ID" value="AAC65815"/>
    <property type="gene ID" value="TP_0849"/>
</dbReference>
<dbReference type="GeneID" id="93876607"/>
<dbReference type="KEGG" id="tpa:TP_0849"/>
<dbReference type="KEGG" id="tpw:TPANIC_0849"/>
<dbReference type="eggNOG" id="COG0291">
    <property type="taxonomic scope" value="Bacteria"/>
</dbReference>
<dbReference type="HOGENOM" id="CLU_169643_1_1_12"/>
<dbReference type="OrthoDB" id="47476at2"/>
<dbReference type="Proteomes" id="UP000000811">
    <property type="component" value="Chromosome"/>
</dbReference>
<dbReference type="GO" id="GO:0022625">
    <property type="term" value="C:cytosolic large ribosomal subunit"/>
    <property type="evidence" value="ECO:0007669"/>
    <property type="project" value="TreeGrafter"/>
</dbReference>
<dbReference type="GO" id="GO:0003735">
    <property type="term" value="F:structural constituent of ribosome"/>
    <property type="evidence" value="ECO:0007669"/>
    <property type="project" value="InterPro"/>
</dbReference>
<dbReference type="GO" id="GO:0006412">
    <property type="term" value="P:translation"/>
    <property type="evidence" value="ECO:0007669"/>
    <property type="project" value="UniProtKB-UniRule"/>
</dbReference>
<dbReference type="FunFam" id="4.10.410.60:FF:000001">
    <property type="entry name" value="50S ribosomal protein L35"/>
    <property type="match status" value="1"/>
</dbReference>
<dbReference type="Gene3D" id="4.10.410.60">
    <property type="match status" value="1"/>
</dbReference>
<dbReference type="HAMAP" id="MF_00514">
    <property type="entry name" value="Ribosomal_bL35"/>
    <property type="match status" value="1"/>
</dbReference>
<dbReference type="InterPro" id="IPR001706">
    <property type="entry name" value="Ribosomal_bL35"/>
</dbReference>
<dbReference type="InterPro" id="IPR021137">
    <property type="entry name" value="Ribosomal_bL35-like"/>
</dbReference>
<dbReference type="InterPro" id="IPR018265">
    <property type="entry name" value="Ribosomal_bL35_CS"/>
</dbReference>
<dbReference type="InterPro" id="IPR037229">
    <property type="entry name" value="Ribosomal_bL35_sf"/>
</dbReference>
<dbReference type="NCBIfam" id="TIGR00001">
    <property type="entry name" value="rpmI_bact"/>
    <property type="match status" value="1"/>
</dbReference>
<dbReference type="PANTHER" id="PTHR33343">
    <property type="entry name" value="54S RIBOSOMAL PROTEIN BL35M"/>
    <property type="match status" value="1"/>
</dbReference>
<dbReference type="PANTHER" id="PTHR33343:SF1">
    <property type="entry name" value="LARGE RIBOSOMAL SUBUNIT PROTEIN BL35M"/>
    <property type="match status" value="1"/>
</dbReference>
<dbReference type="Pfam" id="PF01632">
    <property type="entry name" value="Ribosomal_L35p"/>
    <property type="match status" value="1"/>
</dbReference>
<dbReference type="PRINTS" id="PR00064">
    <property type="entry name" value="RIBOSOMALL35"/>
</dbReference>
<dbReference type="SUPFAM" id="SSF143034">
    <property type="entry name" value="L35p-like"/>
    <property type="match status" value="1"/>
</dbReference>
<dbReference type="PROSITE" id="PS00936">
    <property type="entry name" value="RIBOSOMAL_L35"/>
    <property type="match status" value="1"/>
</dbReference>
<feature type="chain" id="PRO_0000177447" description="Large ribosomal subunit protein bL35">
    <location>
        <begin position="1"/>
        <end position="66"/>
    </location>
</feature>
<reference key="1">
    <citation type="journal article" date="1998" name="Science">
        <title>Complete genome sequence of Treponema pallidum, the syphilis spirochete.</title>
        <authorList>
            <person name="Fraser C.M."/>
            <person name="Norris S.J."/>
            <person name="Weinstock G.M."/>
            <person name="White O."/>
            <person name="Sutton G.G."/>
            <person name="Dodson R.J."/>
            <person name="Gwinn M.L."/>
            <person name="Hickey E.K."/>
            <person name="Clayton R.A."/>
            <person name="Ketchum K.A."/>
            <person name="Sodergren E."/>
            <person name="Hardham J.M."/>
            <person name="McLeod M.P."/>
            <person name="Salzberg S.L."/>
            <person name="Peterson J.D."/>
            <person name="Khalak H.G."/>
            <person name="Richardson D.L."/>
            <person name="Howell J.K."/>
            <person name="Chidambaram M."/>
            <person name="Utterback T.R."/>
            <person name="McDonald L.A."/>
            <person name="Artiach P."/>
            <person name="Bowman C."/>
            <person name="Cotton M.D."/>
            <person name="Fujii C."/>
            <person name="Garland S.A."/>
            <person name="Hatch B."/>
            <person name="Horst K."/>
            <person name="Roberts K.M."/>
            <person name="Sandusky M."/>
            <person name="Weidman J.F."/>
            <person name="Smith H.O."/>
            <person name="Venter J.C."/>
        </authorList>
    </citation>
    <scope>NUCLEOTIDE SEQUENCE [LARGE SCALE GENOMIC DNA]</scope>
    <source>
        <strain>Nichols</strain>
    </source>
</reference>
<sequence length="66" mass="7549">MAKMKTKSAAAKRFSVTGAGKVKFKKMNLRHILTKKAPKRKRKLRHAGFLSKVELKVVKRKLLPYA</sequence>
<gene>
    <name evidence="1" type="primary">rpmI</name>
    <name type="ordered locus">TP_0849</name>
</gene>
<protein>
    <recommendedName>
        <fullName evidence="1">Large ribosomal subunit protein bL35</fullName>
    </recommendedName>
    <alternativeName>
        <fullName evidence="2">50S ribosomal protein L35</fullName>
    </alternativeName>
</protein>
<proteinExistence type="inferred from homology"/>
<keyword id="KW-1185">Reference proteome</keyword>
<keyword id="KW-0687">Ribonucleoprotein</keyword>
<keyword id="KW-0689">Ribosomal protein</keyword>
<name>RL35_TREPA</name>
<organism>
    <name type="scientific">Treponema pallidum (strain Nichols)</name>
    <dbReference type="NCBI Taxonomy" id="243276"/>
    <lineage>
        <taxon>Bacteria</taxon>
        <taxon>Pseudomonadati</taxon>
        <taxon>Spirochaetota</taxon>
        <taxon>Spirochaetia</taxon>
        <taxon>Spirochaetales</taxon>
        <taxon>Treponemataceae</taxon>
        <taxon>Treponema</taxon>
    </lineage>
</organism>
<comment type="similarity">
    <text evidence="1">Belongs to the bacterial ribosomal protein bL35 family.</text>
</comment>
<accession>O83821</accession>
<evidence type="ECO:0000255" key="1">
    <source>
        <dbReference type="HAMAP-Rule" id="MF_00514"/>
    </source>
</evidence>
<evidence type="ECO:0000305" key="2"/>